<gene>
    <name type="primary">RPL1</name>
    <name type="ORF">SOVF_186350</name>
</gene>
<feature type="transit peptide" description="Chloroplast" evidence="3 5">
    <location>
        <begin position="1"/>
        <end position="72"/>
    </location>
</feature>
<feature type="chain" id="PRO_0000249343" description="Large ribosomal subunit protein uL1c">
    <location>
        <begin position="73"/>
        <end position="352"/>
    </location>
</feature>
<feature type="region of interest" description="Disordered" evidence="2">
    <location>
        <begin position="82"/>
        <end position="113"/>
    </location>
</feature>
<feature type="sequence conflict" description="In Ref. 2; KNA05869." evidence="8" ref="2">
    <original>E</original>
    <variation>K</variation>
    <location>
        <position position="295"/>
    </location>
</feature>
<sequence length="352" mass="38628">MATAAPPSLSLCYASSSFQYQQDPSFQTHFKPLLLNSSLCRLTLNQRERSCLKWVDFTSQKQSPKSVSFRVLAAVAAEAEVADMEEEEGESGGVATLPSPTKPKKGKAALPLKSDRTRSKRFLEIQKLREIKQEYDLKTALSLMKQMSSTKFVETAEAHFRLNIDPKYNDQQLRATVSLPKGTGKTVKIAVLAQGDKIDEAKAAGADIVGGEELIEQIKGGFMDFDKLIATSDMMAKVASLGRILGPRGLMPTPKAGTVTPNVAQAVEEFKKGKVEFRVDKTGIVHIPFGKLNFEEEDLLINLFATIKSVETNKPTGAKGVYWKSAHISSSMGPSIRLNIREMLDYKPPSNA</sequence>
<protein>
    <recommendedName>
        <fullName evidence="7">Large ribosomal subunit protein uL1c</fullName>
    </recommendedName>
    <alternativeName>
        <fullName evidence="6">50S ribosomal protein L1, chloroplastic</fullName>
    </alternativeName>
    <alternativeName>
        <fullName>CL1</fullName>
    </alternativeName>
</protein>
<accession>Q9LE95</accession>
<accession>A0A0K9QF10</accession>
<accession>P82178</accession>
<evidence type="ECO:0000255" key="1"/>
<evidence type="ECO:0000256" key="2">
    <source>
        <dbReference type="SAM" id="MobiDB-lite"/>
    </source>
</evidence>
<evidence type="ECO:0000269" key="3">
    <source>
    </source>
</evidence>
<evidence type="ECO:0000269" key="4">
    <source>
    </source>
</evidence>
<evidence type="ECO:0000269" key="5">
    <source ref="3"/>
</evidence>
<evidence type="ECO:0000303" key="6">
    <source>
    </source>
</evidence>
<evidence type="ECO:0000303" key="7">
    <source>
    </source>
</evidence>
<evidence type="ECO:0000305" key="8"/>
<evidence type="ECO:0000305" key="9">
    <source>
    </source>
</evidence>
<evidence type="ECO:0000305" key="10">
    <source>
    </source>
</evidence>
<keyword id="KW-0002">3D-structure</keyword>
<keyword id="KW-0150">Chloroplast</keyword>
<keyword id="KW-0903">Direct protein sequencing</keyword>
<keyword id="KW-0934">Plastid</keyword>
<keyword id="KW-1185">Reference proteome</keyword>
<keyword id="KW-0687">Ribonucleoprotein</keyword>
<keyword id="KW-0689">Ribosomal protein</keyword>
<keyword id="KW-0694">RNA-binding</keyword>
<keyword id="KW-0699">rRNA-binding</keyword>
<keyword id="KW-0809">Transit peptide</keyword>
<reference key="1">
    <citation type="submission" date="1993-12" db="EMBL/GenBank/DDBJ databases">
        <authorList>
            <person name="Kavousi M."/>
            <person name="Webster C."/>
            <person name="Wegloehner W."/>
            <person name="Gray J."/>
            <person name="Subramanian A.R."/>
        </authorList>
    </citation>
    <scope>NUCLEOTIDE SEQUENCE [MRNA]</scope>
    <source>
        <strain>cv. Matador</strain>
    </source>
</reference>
<reference key="2">
    <citation type="journal article" date="2014" name="Nature">
        <title>The genome of the recently domesticated crop plant sugar beet (Beta vulgaris).</title>
        <authorList>
            <person name="Dohm J.C."/>
            <person name="Minoche A.E."/>
            <person name="Holtgraewe D."/>
            <person name="Capella-Gutierrez S."/>
            <person name="Zakrzewski F."/>
            <person name="Tafer H."/>
            <person name="Rupp O."/>
            <person name="Soerensen T.R."/>
            <person name="Stracke R."/>
            <person name="Reinhardt R."/>
            <person name="Goesmann A."/>
            <person name="Kraft T."/>
            <person name="Schulz B."/>
            <person name="Stadler P.F."/>
            <person name="Schmidt T."/>
            <person name="Gabaldon T."/>
            <person name="Lehrach H."/>
            <person name="Weisshaar B."/>
            <person name="Himmelbauer H."/>
        </authorList>
    </citation>
    <scope>NUCLEOTIDE SEQUENCE [LARGE SCALE GENOMIC DNA]</scope>
    <source>
        <strain>cv. Viroflay</strain>
        <tissue>Leaf</tissue>
    </source>
</reference>
<reference key="3">
    <citation type="submission" date="1999-11" db="UniProtKB">
        <authorList>
            <person name="Yamaguchi K."/>
            <person name="von Knoblauch K."/>
            <person name="Subramanian A.R."/>
        </authorList>
    </citation>
    <scope>PROTEIN SEQUENCE OF 73-95; 110-116; 119-121; 152-158; 162-176; 189-193; 203-207; 225-231; 238-260; 275-278; 305-312; 320-322 AND 338-349</scope>
</reference>
<reference key="4">
    <citation type="journal article" date="2000" name="J. Biol. Chem.">
        <title>The plastid ribosomal proteins. Identification of all the proteins in the 50S subunit of an organelle ribosome (chloroplast).</title>
        <authorList>
            <person name="Yamaguchi K."/>
            <person name="Subramanian A.R."/>
        </authorList>
    </citation>
    <scope>PROTEIN SEQUENCE OF 73-78</scope>
    <scope>SUBUNIT</scope>
    <scope>SUBCELLULAR LOCATION</scope>
    <scope>MASS SPECTROMETRY</scope>
    <source>
        <strain>cv. Alwaro</strain>
        <tissue>Leaf</tissue>
    </source>
</reference>
<reference key="5">
    <citation type="journal article" date="2007" name="Proc. Natl. Acad. Sci. U.S.A.">
        <title>Cryo-EM study of the spinach chloroplast ribosome reveals the structural and functional roles of plastid-specific ribosomal proteins.</title>
        <authorList>
            <person name="Sharma M.R."/>
            <person name="Wilson D.N."/>
            <person name="Datta P.P."/>
            <person name="Barat C."/>
            <person name="Schluenzen F."/>
            <person name="Fucini P."/>
            <person name="Agrawal R.K."/>
        </authorList>
    </citation>
    <scope>STRUCTURE BY ELECTRON MICROSCOPY (9.4 ANGSTROMS)</scope>
</reference>
<reference key="6">
    <citation type="journal article" date="2017" name="EMBO J.">
        <title>The complete structure of the chloroplast 70S ribosome in complex with translation factor pY.</title>
        <authorList>
            <person name="Bieri P."/>
            <person name="Leibundgut M."/>
            <person name="Saurer M."/>
            <person name="Boehringer D."/>
            <person name="Ban N."/>
        </authorList>
    </citation>
    <scope>NOMENCLATURE</scope>
    <scope>SUBUNIT</scope>
    <scope>SUBCELLULAR LOCATION</scope>
</reference>
<comment type="function">
    <text evidence="9 10">Component of the chloroplast ribosome (chloro-ribosome), a dedicated translation machinery responsible for the synthesis of chloroplast genome-encoded proteins, including proteins of the transcription and translation machinery and components of the photosynthetic apparatus.</text>
</comment>
<comment type="subunit">
    <text evidence="3 4">Component of the chloroplast large ribosomal subunit (LSU). Mature 70S chloroplast ribosomes of higher plants consist of a small (30S) and a large (50S) subunit. The 30S small subunit contains 1 molecule of ribosomal RNA (16S rRNA) and 24 different proteins. The 50S large subunit contains 3 rRNA molecules (23S, 5S and 4.5S rRNA) and 33 different proteins.</text>
</comment>
<comment type="subcellular location">
    <subcellularLocation>
        <location evidence="3 4">Plastid</location>
        <location evidence="3 4">Chloroplast</location>
    </subcellularLocation>
</comment>
<comment type="mass spectrometry" mass="30447.0" method="Electrospray" evidence="3"/>
<comment type="similarity">
    <text evidence="1">Belongs to the universal ribosomal protein uL1 family.</text>
</comment>
<organism>
    <name type="scientific">Spinacia oleracea</name>
    <name type="common">Spinach</name>
    <dbReference type="NCBI Taxonomy" id="3562"/>
    <lineage>
        <taxon>Eukaryota</taxon>
        <taxon>Viridiplantae</taxon>
        <taxon>Streptophyta</taxon>
        <taxon>Embryophyta</taxon>
        <taxon>Tracheophyta</taxon>
        <taxon>Spermatophyta</taxon>
        <taxon>Magnoliopsida</taxon>
        <taxon>eudicotyledons</taxon>
        <taxon>Gunneridae</taxon>
        <taxon>Pentapetalae</taxon>
        <taxon>Caryophyllales</taxon>
        <taxon>Chenopodiaceae</taxon>
        <taxon>Chenopodioideae</taxon>
        <taxon>Anserineae</taxon>
        <taxon>Spinacia</taxon>
    </lineage>
</organism>
<proteinExistence type="evidence at protein level"/>
<dbReference type="EMBL" id="X76932">
    <property type="protein sequence ID" value="CAA54255.1"/>
    <property type="molecule type" value="mRNA"/>
</dbReference>
<dbReference type="EMBL" id="KQ187486">
    <property type="protein sequence ID" value="KNA05869.1"/>
    <property type="molecule type" value="Genomic_DNA"/>
</dbReference>
<dbReference type="PIR" id="T51935">
    <property type="entry name" value="T51935"/>
</dbReference>
<dbReference type="PDB" id="4V61">
    <property type="method" value="EM"/>
    <property type="resolution" value="9.40 A"/>
    <property type="chains" value="BD=1-352"/>
</dbReference>
<dbReference type="PDBsum" id="4V61"/>
<dbReference type="SMR" id="Q9LE95"/>
<dbReference type="STRING" id="3562.Q9LE95"/>
<dbReference type="Proteomes" id="UP001155700">
    <property type="component" value="Unplaced"/>
</dbReference>
<dbReference type="GO" id="GO:0009507">
    <property type="term" value="C:chloroplast"/>
    <property type="evidence" value="ECO:0007669"/>
    <property type="project" value="UniProtKB-SubCell"/>
</dbReference>
<dbReference type="GO" id="GO:0015934">
    <property type="term" value="C:large ribosomal subunit"/>
    <property type="evidence" value="ECO:0007669"/>
    <property type="project" value="InterPro"/>
</dbReference>
<dbReference type="GO" id="GO:0019843">
    <property type="term" value="F:rRNA binding"/>
    <property type="evidence" value="ECO:0007669"/>
    <property type="project" value="UniProtKB-KW"/>
</dbReference>
<dbReference type="GO" id="GO:0003735">
    <property type="term" value="F:structural constituent of ribosome"/>
    <property type="evidence" value="ECO:0007669"/>
    <property type="project" value="InterPro"/>
</dbReference>
<dbReference type="GO" id="GO:0006412">
    <property type="term" value="P:translation"/>
    <property type="evidence" value="ECO:0007669"/>
    <property type="project" value="InterPro"/>
</dbReference>
<dbReference type="CDD" id="cd00403">
    <property type="entry name" value="Ribosomal_L1"/>
    <property type="match status" value="1"/>
</dbReference>
<dbReference type="FunFam" id="3.40.50.790:FF:000001">
    <property type="entry name" value="50S ribosomal protein L1"/>
    <property type="match status" value="1"/>
</dbReference>
<dbReference type="Gene3D" id="3.30.190.20">
    <property type="match status" value="1"/>
</dbReference>
<dbReference type="Gene3D" id="3.40.50.790">
    <property type="match status" value="1"/>
</dbReference>
<dbReference type="HAMAP" id="MF_01318_B">
    <property type="entry name" value="Ribosomal_uL1_B"/>
    <property type="match status" value="1"/>
</dbReference>
<dbReference type="InterPro" id="IPR005878">
    <property type="entry name" value="Ribosom_uL1_bac-type"/>
</dbReference>
<dbReference type="InterPro" id="IPR023674">
    <property type="entry name" value="Ribosomal_uL1-like"/>
</dbReference>
<dbReference type="InterPro" id="IPR028364">
    <property type="entry name" value="Ribosomal_uL1/biogenesis"/>
</dbReference>
<dbReference type="InterPro" id="IPR016095">
    <property type="entry name" value="Ribosomal_uL1_3-a/b-sand"/>
</dbReference>
<dbReference type="InterPro" id="IPR023673">
    <property type="entry name" value="Ribosomal_uL1_CS"/>
</dbReference>
<dbReference type="NCBIfam" id="TIGR01169">
    <property type="entry name" value="rplA_bact"/>
    <property type="match status" value="1"/>
</dbReference>
<dbReference type="PANTHER" id="PTHR36427">
    <property type="entry name" value="54S RIBOSOMAL PROTEIN L1, MITOCHONDRIAL"/>
    <property type="match status" value="1"/>
</dbReference>
<dbReference type="PANTHER" id="PTHR36427:SF3">
    <property type="entry name" value="LARGE RIBOSOMAL SUBUNIT PROTEIN UL1M"/>
    <property type="match status" value="1"/>
</dbReference>
<dbReference type="Pfam" id="PF00687">
    <property type="entry name" value="Ribosomal_L1"/>
    <property type="match status" value="1"/>
</dbReference>
<dbReference type="SUPFAM" id="SSF56808">
    <property type="entry name" value="Ribosomal protein L1"/>
    <property type="match status" value="1"/>
</dbReference>
<dbReference type="PROSITE" id="PS01199">
    <property type="entry name" value="RIBOSOMAL_L1"/>
    <property type="match status" value="1"/>
</dbReference>
<name>RK1_SPIOL</name>